<sequence length="932" mass="105343">MTNERKEVSEAPVNFGANLGLMLDLYDDFLQDPSSVPEDLQVLFSTIKNDDSIVPALKSTSSQNSDGTIKRVMRLIDNIRQYGHLKADIYPVNPPKRKHVPKLEIEDFDLDQQTLEGISAGIVSDHFADIYDNAYEAILRMEKRYKGPIAFEYTHINNNTERGWLKRRIETPYKVTLNNNEKRALFKQLAYVEGFEKYLHKNFVGAKRFSIEGVDALVPMLQRTITIAAKEGIKNIQIGMAHRGRLNVLTHVLEKPYEMMISEFMHTDPMKFLPEDGSLQLTAGWTGDVKYHLGGIKTTDSYGTMQRIALANNPSHLEIVAPVVEGRTRAAQDDTQRAGAPTTDHHKAMPIIIHGDAAYPGQGINFETMNLGNLKGYSTGGSLHIITNNRIGFTTEPIDARSTTYSTDVAKGYDVPIFHVNADDVEATIEAIDIAMEFRKEFHKDVVIDLVGYRRFGHNEMDEPSITNPVPYQNIRKHDSVEYVFGKKLVNEGVISEDEMHSFIEQVQKELRQAHDKINKADKMDNPDMEKPADLALPLQADEQSFTFDHLKEINDALLTYPDGFNILKKLNKVLEKRHEPFNKEDGLVDWAQAEQLAFATILQDGTPIRLTGQDSERGTFSHRHAVLHDEQTGETYTPLHHVPDQKATFDIHNSPLSEAAVVGFEYGYNVENKKSFNIWEAQYGDFANMSQMIFDNFLFSSRSKWGERSGLTLFLPHAYEGQGPEHSSARLERFLQLAAENNCTVVNLSSSSNYFHLLRAQAASLDSEQMRPLVVMSPKSLLRNKTVAKPIDEFTSGGFEPILTESYQADKVTKVILATGKMFIDLKEALAKNPDESVLLVAIERLYPFPEEEIEALLAQLPNLEEVSWVQEEPKNQGAWLYVYPYVKVLVADKYDLSYHGRIQRAAPAEGDGEIHKLVQNKIIENALKNN</sequence>
<comment type="function">
    <text evidence="1">E1 component of the 2-oxoglutarate dehydrogenase (OGDH) complex which catalyzes the decarboxylation of 2-oxoglutarate, the first step in the conversion of 2-oxoglutarate to succinyl-CoA and CO(2).</text>
</comment>
<comment type="catalytic activity">
    <reaction evidence="1">
        <text>N(6)-[(R)-lipoyl]-L-lysyl-[protein] + 2-oxoglutarate + H(+) = N(6)-[(R)-S(8)-succinyldihydrolipoyl]-L-lysyl-[protein] + CO2</text>
        <dbReference type="Rhea" id="RHEA:12188"/>
        <dbReference type="Rhea" id="RHEA-COMP:10474"/>
        <dbReference type="Rhea" id="RHEA-COMP:20092"/>
        <dbReference type="ChEBI" id="CHEBI:15378"/>
        <dbReference type="ChEBI" id="CHEBI:16526"/>
        <dbReference type="ChEBI" id="CHEBI:16810"/>
        <dbReference type="ChEBI" id="CHEBI:83099"/>
        <dbReference type="ChEBI" id="CHEBI:83120"/>
        <dbReference type="EC" id="1.2.4.2"/>
    </reaction>
</comment>
<comment type="cofactor">
    <cofactor evidence="1">
        <name>thiamine diphosphate</name>
        <dbReference type="ChEBI" id="CHEBI:58937"/>
    </cofactor>
</comment>
<comment type="subunit">
    <text evidence="1">Homodimer. Part of the 2-oxoglutarate dehydrogenase (OGDH) complex composed of E1 (2-oxoglutarate dehydrogenase), E2 (dihydrolipoamide succinyltransferase) and E3 (dihydrolipoamide dehydrogenase); the complex contains multiple copies of the three enzymatic components (E1, E2 and E3).</text>
</comment>
<comment type="similarity">
    <text evidence="1">Belongs to the alpha-ketoglutarate dehydrogenase family.</text>
</comment>
<proteinExistence type="inferred from homology"/>
<gene>
    <name evidence="1" type="primary">odhA</name>
    <name type="ordered locus">SAS1356</name>
</gene>
<name>ODO1_STAAS</name>
<accession>Q6G9E8</accession>
<protein>
    <recommendedName>
        <fullName evidence="1">2-oxoglutarate dehydrogenase E1 component</fullName>
        <ecNumber evidence="1">1.2.4.2</ecNumber>
    </recommendedName>
    <alternativeName>
        <fullName evidence="1">Alpha-ketoglutarate dehydrogenase</fullName>
    </alternativeName>
</protein>
<reference key="1">
    <citation type="journal article" date="2004" name="Proc. Natl. Acad. Sci. U.S.A.">
        <title>Complete genomes of two clinical Staphylococcus aureus strains: evidence for the rapid evolution of virulence and drug resistance.</title>
        <authorList>
            <person name="Holden M.T.G."/>
            <person name="Feil E.J."/>
            <person name="Lindsay J.A."/>
            <person name="Peacock S.J."/>
            <person name="Day N.P.J."/>
            <person name="Enright M.C."/>
            <person name="Foster T.J."/>
            <person name="Moore C.E."/>
            <person name="Hurst L."/>
            <person name="Atkin R."/>
            <person name="Barron A."/>
            <person name="Bason N."/>
            <person name="Bentley S.D."/>
            <person name="Chillingworth C."/>
            <person name="Chillingworth T."/>
            <person name="Churcher C."/>
            <person name="Clark L."/>
            <person name="Corton C."/>
            <person name="Cronin A."/>
            <person name="Doggett J."/>
            <person name="Dowd L."/>
            <person name="Feltwell T."/>
            <person name="Hance Z."/>
            <person name="Harris B."/>
            <person name="Hauser H."/>
            <person name="Holroyd S."/>
            <person name="Jagels K."/>
            <person name="James K.D."/>
            <person name="Lennard N."/>
            <person name="Line A."/>
            <person name="Mayes R."/>
            <person name="Moule S."/>
            <person name="Mungall K."/>
            <person name="Ormond D."/>
            <person name="Quail M.A."/>
            <person name="Rabbinowitsch E."/>
            <person name="Rutherford K.M."/>
            <person name="Sanders M."/>
            <person name="Sharp S."/>
            <person name="Simmonds M."/>
            <person name="Stevens K."/>
            <person name="Whitehead S."/>
            <person name="Barrell B.G."/>
            <person name="Spratt B.G."/>
            <person name="Parkhill J."/>
        </authorList>
    </citation>
    <scope>NUCLEOTIDE SEQUENCE [LARGE SCALE GENOMIC DNA]</scope>
    <source>
        <strain>MSSA476</strain>
    </source>
</reference>
<evidence type="ECO:0000255" key="1">
    <source>
        <dbReference type="HAMAP-Rule" id="MF_01169"/>
    </source>
</evidence>
<dbReference type="EC" id="1.2.4.2" evidence="1"/>
<dbReference type="EMBL" id="BX571857">
    <property type="protein sequence ID" value="CAG43131.1"/>
    <property type="molecule type" value="Genomic_DNA"/>
</dbReference>
<dbReference type="RefSeq" id="WP_000180666.1">
    <property type="nucleotide sequence ID" value="NC_002953.3"/>
</dbReference>
<dbReference type="SMR" id="Q6G9E8"/>
<dbReference type="KEGG" id="sas:SAS1356"/>
<dbReference type="HOGENOM" id="CLU_004709_1_0_9"/>
<dbReference type="GO" id="GO:0005829">
    <property type="term" value="C:cytosol"/>
    <property type="evidence" value="ECO:0007669"/>
    <property type="project" value="TreeGrafter"/>
</dbReference>
<dbReference type="GO" id="GO:0045252">
    <property type="term" value="C:oxoglutarate dehydrogenase complex"/>
    <property type="evidence" value="ECO:0007669"/>
    <property type="project" value="TreeGrafter"/>
</dbReference>
<dbReference type="GO" id="GO:0004591">
    <property type="term" value="F:oxoglutarate dehydrogenase (succinyl-transferring) activity"/>
    <property type="evidence" value="ECO:0007669"/>
    <property type="project" value="UniProtKB-UniRule"/>
</dbReference>
<dbReference type="GO" id="GO:0030976">
    <property type="term" value="F:thiamine pyrophosphate binding"/>
    <property type="evidence" value="ECO:0007669"/>
    <property type="project" value="UniProtKB-UniRule"/>
</dbReference>
<dbReference type="GO" id="GO:0006096">
    <property type="term" value="P:glycolytic process"/>
    <property type="evidence" value="ECO:0007669"/>
    <property type="project" value="UniProtKB-UniRule"/>
</dbReference>
<dbReference type="GO" id="GO:0006099">
    <property type="term" value="P:tricarboxylic acid cycle"/>
    <property type="evidence" value="ECO:0007669"/>
    <property type="project" value="TreeGrafter"/>
</dbReference>
<dbReference type="CDD" id="cd02016">
    <property type="entry name" value="TPP_E1_OGDC_like"/>
    <property type="match status" value="1"/>
</dbReference>
<dbReference type="FunFam" id="3.40.50.11610:FF:000002">
    <property type="entry name" value="2-oxoglutarate dehydrogenase E1 component"/>
    <property type="match status" value="1"/>
</dbReference>
<dbReference type="FunFam" id="3.40.50.970:FF:000036">
    <property type="entry name" value="2-oxoglutarate dehydrogenase E1 component"/>
    <property type="match status" value="1"/>
</dbReference>
<dbReference type="Gene3D" id="3.40.50.12470">
    <property type="match status" value="1"/>
</dbReference>
<dbReference type="Gene3D" id="3.40.50.970">
    <property type="match status" value="1"/>
</dbReference>
<dbReference type="Gene3D" id="3.40.50.11610">
    <property type="entry name" value="Multifunctional 2-oxoglutarate metabolism enzyme, C-terminal domain"/>
    <property type="match status" value="1"/>
</dbReference>
<dbReference type="Gene3D" id="1.10.287.1150">
    <property type="entry name" value="TPP helical domain"/>
    <property type="match status" value="1"/>
</dbReference>
<dbReference type="HAMAP" id="MF_01169">
    <property type="entry name" value="SucA_OdhA"/>
    <property type="match status" value="1"/>
</dbReference>
<dbReference type="InterPro" id="IPR011603">
    <property type="entry name" value="2oxoglutarate_DH_E1"/>
</dbReference>
<dbReference type="InterPro" id="IPR023784">
    <property type="entry name" value="2oxoglutarate_DH_E1_bac"/>
</dbReference>
<dbReference type="InterPro" id="IPR001017">
    <property type="entry name" value="DH_E1"/>
</dbReference>
<dbReference type="InterPro" id="IPR042179">
    <property type="entry name" value="KGD_C_sf"/>
</dbReference>
<dbReference type="InterPro" id="IPR031717">
    <property type="entry name" value="ODO-1/KGD_C"/>
</dbReference>
<dbReference type="InterPro" id="IPR029061">
    <property type="entry name" value="THDP-binding"/>
</dbReference>
<dbReference type="InterPro" id="IPR005475">
    <property type="entry name" value="Transketolase-like_Pyr-bd"/>
</dbReference>
<dbReference type="NCBIfam" id="TIGR00239">
    <property type="entry name" value="2oxo_dh_E1"/>
    <property type="match status" value="1"/>
</dbReference>
<dbReference type="NCBIfam" id="NF006914">
    <property type="entry name" value="PRK09404.1"/>
    <property type="match status" value="1"/>
</dbReference>
<dbReference type="NCBIfam" id="NF008907">
    <property type="entry name" value="PRK12270.1"/>
    <property type="match status" value="1"/>
</dbReference>
<dbReference type="PANTHER" id="PTHR23152:SF4">
    <property type="entry name" value="2-OXOADIPATE DEHYDROGENASE COMPLEX COMPONENT E1"/>
    <property type="match status" value="1"/>
</dbReference>
<dbReference type="PANTHER" id="PTHR23152">
    <property type="entry name" value="2-OXOGLUTARATE DEHYDROGENASE"/>
    <property type="match status" value="1"/>
</dbReference>
<dbReference type="Pfam" id="PF00676">
    <property type="entry name" value="E1_dh"/>
    <property type="match status" value="1"/>
</dbReference>
<dbReference type="Pfam" id="PF16870">
    <property type="entry name" value="OxoGdeHyase_C"/>
    <property type="match status" value="1"/>
</dbReference>
<dbReference type="Pfam" id="PF02779">
    <property type="entry name" value="Transket_pyr"/>
    <property type="match status" value="1"/>
</dbReference>
<dbReference type="PIRSF" id="PIRSF000157">
    <property type="entry name" value="Oxoglu_dh_E1"/>
    <property type="match status" value="1"/>
</dbReference>
<dbReference type="SMART" id="SM00861">
    <property type="entry name" value="Transket_pyr"/>
    <property type="match status" value="1"/>
</dbReference>
<dbReference type="SUPFAM" id="SSF52518">
    <property type="entry name" value="Thiamin diphosphate-binding fold (THDP-binding)"/>
    <property type="match status" value="2"/>
</dbReference>
<organism>
    <name type="scientific">Staphylococcus aureus (strain MSSA476)</name>
    <dbReference type="NCBI Taxonomy" id="282459"/>
    <lineage>
        <taxon>Bacteria</taxon>
        <taxon>Bacillati</taxon>
        <taxon>Bacillota</taxon>
        <taxon>Bacilli</taxon>
        <taxon>Bacillales</taxon>
        <taxon>Staphylococcaceae</taxon>
        <taxon>Staphylococcus</taxon>
    </lineage>
</organism>
<keyword id="KW-0324">Glycolysis</keyword>
<keyword id="KW-0560">Oxidoreductase</keyword>
<keyword id="KW-0786">Thiamine pyrophosphate</keyword>
<feature type="chain" id="PRO_0000162180" description="2-oxoglutarate dehydrogenase E1 component">
    <location>
        <begin position="1"/>
        <end position="932"/>
    </location>
</feature>